<accession>A4QL32</accession>
<dbReference type="EMBL" id="AP009373">
    <property type="protein sequence ID" value="BAF50387.1"/>
    <property type="molecule type" value="Genomic_DNA"/>
</dbReference>
<dbReference type="RefSeq" id="YP_001123563.1">
    <property type="nucleotide sequence ID" value="NC_009272.1"/>
</dbReference>
<dbReference type="SMR" id="A4QL32"/>
<dbReference type="GeneID" id="4964675"/>
<dbReference type="GO" id="GO:0009535">
    <property type="term" value="C:chloroplast thylakoid membrane"/>
    <property type="evidence" value="ECO:0007669"/>
    <property type="project" value="UniProtKB-SubCell"/>
</dbReference>
<dbReference type="GO" id="GO:0009055">
    <property type="term" value="F:electron transfer activity"/>
    <property type="evidence" value="ECO:0007669"/>
    <property type="project" value="UniProtKB-UniRule"/>
</dbReference>
<dbReference type="GO" id="GO:0020037">
    <property type="term" value="F:heme binding"/>
    <property type="evidence" value="ECO:0007669"/>
    <property type="project" value="InterPro"/>
</dbReference>
<dbReference type="GO" id="GO:0005506">
    <property type="term" value="F:iron ion binding"/>
    <property type="evidence" value="ECO:0007669"/>
    <property type="project" value="InterPro"/>
</dbReference>
<dbReference type="GO" id="GO:0015979">
    <property type="term" value="P:photosynthesis"/>
    <property type="evidence" value="ECO:0007669"/>
    <property type="project" value="UniProtKB-UniRule"/>
</dbReference>
<dbReference type="FunFam" id="1.20.5.700:FF:000001">
    <property type="entry name" value="Cytochrome f"/>
    <property type="match status" value="1"/>
</dbReference>
<dbReference type="FunFam" id="2.40.50.100:FF:000007">
    <property type="entry name" value="Cytochrome f"/>
    <property type="match status" value="1"/>
</dbReference>
<dbReference type="FunFam" id="2.60.40.830:FF:000001">
    <property type="entry name" value="Cytochrome f"/>
    <property type="match status" value="1"/>
</dbReference>
<dbReference type="Gene3D" id="2.40.50.100">
    <property type="match status" value="1"/>
</dbReference>
<dbReference type="Gene3D" id="2.60.40.830">
    <property type="entry name" value="Cytochrome f large domain"/>
    <property type="match status" value="1"/>
</dbReference>
<dbReference type="Gene3D" id="1.20.5.700">
    <property type="entry name" value="Single helix bin"/>
    <property type="match status" value="1"/>
</dbReference>
<dbReference type="HAMAP" id="MF_00610">
    <property type="entry name" value="Cytb6_f_cytF"/>
    <property type="match status" value="1"/>
</dbReference>
<dbReference type="InterPro" id="IPR024058">
    <property type="entry name" value="Cyt-f_TM"/>
</dbReference>
<dbReference type="InterPro" id="IPR002325">
    <property type="entry name" value="Cyt_f"/>
</dbReference>
<dbReference type="InterPro" id="IPR024094">
    <property type="entry name" value="Cyt_f_lg_dom"/>
</dbReference>
<dbReference type="InterPro" id="IPR036826">
    <property type="entry name" value="Cyt_f_lg_dom_sf"/>
</dbReference>
<dbReference type="InterPro" id="IPR011054">
    <property type="entry name" value="Rudment_hybrid_motif"/>
</dbReference>
<dbReference type="PANTHER" id="PTHR33288">
    <property type="match status" value="1"/>
</dbReference>
<dbReference type="PANTHER" id="PTHR33288:SF10">
    <property type="entry name" value="CYTOCHROME F"/>
    <property type="match status" value="1"/>
</dbReference>
<dbReference type="Pfam" id="PF01333">
    <property type="entry name" value="Apocytochr_F_C"/>
    <property type="match status" value="1"/>
</dbReference>
<dbReference type="Pfam" id="PF16639">
    <property type="entry name" value="Apocytochr_F_N"/>
    <property type="match status" value="1"/>
</dbReference>
<dbReference type="PRINTS" id="PR00610">
    <property type="entry name" value="CYTOCHROMEF"/>
</dbReference>
<dbReference type="SUPFAM" id="SSF103431">
    <property type="entry name" value="Cytochrome f subunit of the cytochrome b6f complex, transmembrane anchor"/>
    <property type="match status" value="1"/>
</dbReference>
<dbReference type="SUPFAM" id="SSF49441">
    <property type="entry name" value="Cytochrome f, large domain"/>
    <property type="match status" value="1"/>
</dbReference>
<dbReference type="SUPFAM" id="SSF51246">
    <property type="entry name" value="Rudiment single hybrid motif"/>
    <property type="match status" value="1"/>
</dbReference>
<dbReference type="PROSITE" id="PS51010">
    <property type="entry name" value="CYTF"/>
    <property type="match status" value="1"/>
</dbReference>
<name>CYF_DRANE</name>
<sequence length="320" mass="35367">MQTRNTFSWIREEITRSISVSLIIYIITRASISSAYPIFAQQNYENPREATGRIVCANCHLASKPVDIEVPQAVLPDTVFEAVVKIPYDMQLKQVLANGKKGALNVGAVLILPEGFELAPPDRISPEMKEKIGNLSFQNYRPNKKNILVIGPVPGQKYSEITFPILAPDPATNKDVHFLKYPIYVGGNRGRGQIYPDGSKSNNTVYNATAGGIISKIVRKEKGGYEITIVDPSNERQVIDIIPRGLELLVSEGESIKLDQPLTSNPNVGGFGQGDAEIVLQDPLRVQGLLFFLASVVLAQIFLVLKKKQFEKVQLSEMNF</sequence>
<reference key="1">
    <citation type="submission" date="2007-03" db="EMBL/GenBank/DDBJ databases">
        <title>Sequencing analysis of Draba nemoroza chloroplast DNA.</title>
        <authorList>
            <person name="Hosouchi T."/>
            <person name="Tsuruoka H."/>
            <person name="Kotani H."/>
        </authorList>
    </citation>
    <scope>NUCLEOTIDE SEQUENCE [LARGE SCALE GENOMIC DNA]</scope>
</reference>
<comment type="function">
    <text evidence="2">Component of the cytochrome b6-f complex, which mediates electron transfer between photosystem II (PSII) and photosystem I (PSI), cyclic electron flow around PSI, and state transitions.</text>
</comment>
<comment type="cofactor">
    <cofactor evidence="2">
        <name>heme</name>
        <dbReference type="ChEBI" id="CHEBI:30413"/>
    </cofactor>
    <text evidence="2">Binds 1 heme group covalently.</text>
</comment>
<comment type="subunit">
    <text evidence="1">The 4 large subunits of the cytochrome b6-f complex are cytochrome b6, subunit IV (17 kDa polypeptide, petD), cytochrome f and the Rieske protein, while the 4 small subunits are PetG, PetL, PetM and PetN. The complex functions as a dimer (By similarity).</text>
</comment>
<comment type="subcellular location">
    <subcellularLocation>
        <location evidence="2">Plastid</location>
        <location evidence="2">Chloroplast thylakoid membrane</location>
        <topology evidence="2">Single-pass membrane protein</topology>
    </subcellularLocation>
</comment>
<comment type="similarity">
    <text evidence="2">Belongs to the cytochrome f family.</text>
</comment>
<protein>
    <recommendedName>
        <fullName evidence="2">Cytochrome f</fullName>
    </recommendedName>
</protein>
<proteinExistence type="inferred from homology"/>
<organism>
    <name type="scientific">Draba nemorosa</name>
    <name type="common">Woodland whitlowgrass</name>
    <dbReference type="NCBI Taxonomy" id="171822"/>
    <lineage>
        <taxon>Eukaryota</taxon>
        <taxon>Viridiplantae</taxon>
        <taxon>Streptophyta</taxon>
        <taxon>Embryophyta</taxon>
        <taxon>Tracheophyta</taxon>
        <taxon>Spermatophyta</taxon>
        <taxon>Magnoliopsida</taxon>
        <taxon>eudicotyledons</taxon>
        <taxon>Gunneridae</taxon>
        <taxon>Pentapetalae</taxon>
        <taxon>rosids</taxon>
        <taxon>malvids</taxon>
        <taxon>Brassicales</taxon>
        <taxon>Brassicaceae</taxon>
        <taxon>Arabideae</taxon>
        <taxon>Draba</taxon>
    </lineage>
</organism>
<geneLocation type="chloroplast"/>
<feature type="signal peptide" evidence="2">
    <location>
        <begin position="1"/>
        <end position="35"/>
    </location>
</feature>
<feature type="chain" id="PRO_0000342062" description="Cytochrome f">
    <location>
        <begin position="36"/>
        <end position="320"/>
    </location>
</feature>
<feature type="transmembrane region" description="Helical" evidence="2">
    <location>
        <begin position="286"/>
        <end position="306"/>
    </location>
</feature>
<feature type="binding site" description="axial binding residue" evidence="2">
    <location>
        <position position="36"/>
    </location>
    <ligand>
        <name>heme</name>
        <dbReference type="ChEBI" id="CHEBI:30413"/>
    </ligand>
    <ligandPart>
        <name>Fe</name>
        <dbReference type="ChEBI" id="CHEBI:18248"/>
    </ligandPart>
</feature>
<feature type="binding site" description="covalent" evidence="2">
    <location>
        <position position="56"/>
    </location>
    <ligand>
        <name>heme</name>
        <dbReference type="ChEBI" id="CHEBI:30413"/>
    </ligand>
</feature>
<feature type="binding site" description="covalent" evidence="2">
    <location>
        <position position="59"/>
    </location>
    <ligand>
        <name>heme</name>
        <dbReference type="ChEBI" id="CHEBI:30413"/>
    </ligand>
</feature>
<feature type="binding site" description="axial binding residue" evidence="2">
    <location>
        <position position="60"/>
    </location>
    <ligand>
        <name>heme</name>
        <dbReference type="ChEBI" id="CHEBI:30413"/>
    </ligand>
    <ligandPart>
        <name>Fe</name>
        <dbReference type="ChEBI" id="CHEBI:18248"/>
    </ligandPart>
</feature>
<evidence type="ECO:0000250" key="1"/>
<evidence type="ECO:0000255" key="2">
    <source>
        <dbReference type="HAMAP-Rule" id="MF_00610"/>
    </source>
</evidence>
<gene>
    <name evidence="2" type="primary">petA</name>
</gene>
<keyword id="KW-0150">Chloroplast</keyword>
<keyword id="KW-0249">Electron transport</keyword>
<keyword id="KW-0349">Heme</keyword>
<keyword id="KW-0408">Iron</keyword>
<keyword id="KW-0472">Membrane</keyword>
<keyword id="KW-0479">Metal-binding</keyword>
<keyword id="KW-0602">Photosynthesis</keyword>
<keyword id="KW-0934">Plastid</keyword>
<keyword id="KW-0732">Signal</keyword>
<keyword id="KW-0793">Thylakoid</keyword>
<keyword id="KW-0812">Transmembrane</keyword>
<keyword id="KW-1133">Transmembrane helix</keyword>
<keyword id="KW-0813">Transport</keyword>